<evidence type="ECO:0000250" key="1"/>
<evidence type="ECO:0000250" key="2">
    <source>
        <dbReference type="UniProtKB" id="P53994"/>
    </source>
</evidence>
<evidence type="ECO:0000250" key="3">
    <source>
        <dbReference type="UniProtKB" id="P61019"/>
    </source>
</evidence>
<evidence type="ECO:0000250" key="4">
    <source>
        <dbReference type="UniProtKB" id="P61106"/>
    </source>
</evidence>
<evidence type="ECO:0000269" key="5">
    <source>
    </source>
</evidence>
<evidence type="ECO:0000305" key="6"/>
<comment type="function">
    <text evidence="3">The small GTPases Rab are key regulators of intracellular membrane trafficking, from the formation of transport vesicles to their fusion with membranes. Rabs cycle between active GTP-bound and inactive GDP-bound states. In their active state, drive transport of vesicular carriers from donor organelles to acceptor organelles to regulate the membrane traffic that maintains organelle identity and morphology. RAB2A regulates autophagy by promoting autophagosome-lysosome fusion via recruitment of the HOPS endosomal tethering complex; this process involves autophagosomal RAB2A and lysosomal RAB39A recruitment of HOPS subcomplexes VPS39-VPS11 and VPS41-VPS16-VPS18-VPS33A, respectively, which assemble into a functional complex to mediate membrane tethering and SNAREs-driven membrane fusion. Required for protein transport from the endoplasmic reticulum to the Golgi complex. Regulates the compacted morphology of the Golgi. Together with RAB2B, redundantly required for efficient autophagic flux.</text>
</comment>
<comment type="catalytic activity">
    <reaction evidence="2">
        <text>GTP + H2O = GDP + phosphate + H(+)</text>
        <dbReference type="Rhea" id="RHEA:19669"/>
        <dbReference type="ChEBI" id="CHEBI:15377"/>
        <dbReference type="ChEBI" id="CHEBI:15378"/>
        <dbReference type="ChEBI" id="CHEBI:37565"/>
        <dbReference type="ChEBI" id="CHEBI:43474"/>
        <dbReference type="ChEBI" id="CHEBI:58189"/>
        <dbReference type="EC" id="3.6.5.2"/>
    </reaction>
    <physiologicalReaction direction="left-to-right" evidence="2">
        <dbReference type="Rhea" id="RHEA:19670"/>
    </physiologicalReaction>
</comment>
<comment type="cofactor">
    <cofactor evidence="3">
        <name>Mg(2+)</name>
        <dbReference type="ChEBI" id="CHEBI:18420"/>
    </cofactor>
</comment>
<comment type="activity regulation">
    <text evidence="6">Regulated by guanine nucleotide exchange factors (GEFs) which promote the exchange of bound GDP for free GTP, GTPase activating proteins (GAPs) which increase the GTP hydrolysis activity, and GDP dissociation inhibitors (GDIs) which inhibit the dissociation of the nucleotide from the GTPase.</text>
</comment>
<comment type="subunit">
    <text evidence="2 3">Interacts with PRKCI. Interacts with TRIP11 (By similarity). Interacts (in GTP-bound form) with GARIN1B (By similarity). Interacts (GTP-bound) with HOPS complex component VPS39; interaction contributes to obtaining a functional HOPS complex that promotes autophagosome-lysosome membrane fusion driven by STX17-SNAP29-VAMP8. May interact with VPS41 (By similarity).</text>
</comment>
<comment type="subcellular location">
    <subcellularLocation>
        <location evidence="3">Endoplasmic reticulum-Golgi intermediate compartment membrane</location>
        <topology evidence="3">Lipid-anchor</topology>
        <orientation evidence="6">Cytoplasmic side</orientation>
    </subcellularLocation>
    <subcellularLocation>
        <location evidence="3">Melanosome</location>
    </subcellularLocation>
    <subcellularLocation>
        <location evidence="3">Endoplasmic reticulum membrane</location>
        <topology evidence="3">Lipid-anchor</topology>
        <orientation evidence="6">Cytoplasmic side</orientation>
    </subcellularLocation>
    <subcellularLocation>
        <location evidence="3">Golgi apparatus membrane</location>
        <topology evidence="3">Lipid-anchor</topology>
        <orientation evidence="6">Cytoplasmic side</orientation>
    </subcellularLocation>
    <subcellularLocation>
        <location evidence="2">Cytoplasmic vesicle</location>
        <location evidence="2">Secretory vesicle</location>
        <location evidence="2">Acrosome</location>
    </subcellularLocation>
    <subcellularLocation>
        <location evidence="2">Cytoplasmic vesicle</location>
        <location evidence="2">Autophagosome membrane</location>
        <topology evidence="3">Lipid-anchor</topology>
        <orientation evidence="6">Cytoplasmic side</orientation>
    </subcellularLocation>
    <text evidence="2 3">Localized in the Golgi apparatus in the round spermatids and in the acrosome in the elongating spermatid (By similarity). Identified by mass spectrometry in melanosome fractions from stage I to stage IV (By similarity).</text>
</comment>
<comment type="domain">
    <text evidence="4">Switch I, switch II and the interswitch regions are characteristic of Rab GTPases and mediate the interactions with Rab downstream effectors. The switch regions undergo conformational changes upon nucleotide binding which drives interaction with specific sets of effector proteins, with most effectors only binding to GTP-bound Rab.</text>
</comment>
<comment type="PTM">
    <text evidence="3">Prenylated. Prenylation is required for association with cellular membranes.</text>
</comment>
<comment type="similarity">
    <text evidence="6">Belongs to the small GTPase superfamily. Rab family.</text>
</comment>
<keyword id="KW-0007">Acetylation</keyword>
<keyword id="KW-0968">Cytoplasmic vesicle</keyword>
<keyword id="KW-0256">Endoplasmic reticulum</keyword>
<keyword id="KW-0931">ER-Golgi transport</keyword>
<keyword id="KW-0333">Golgi apparatus</keyword>
<keyword id="KW-0342">GTP-binding</keyword>
<keyword id="KW-0378">Hydrolase</keyword>
<keyword id="KW-0449">Lipoprotein</keyword>
<keyword id="KW-0460">Magnesium</keyword>
<keyword id="KW-0472">Membrane</keyword>
<keyword id="KW-0479">Metal-binding</keyword>
<keyword id="KW-0547">Nucleotide-binding</keyword>
<keyword id="KW-0636">Prenylation</keyword>
<keyword id="KW-0653">Protein transport</keyword>
<keyword id="KW-1185">Reference proteome</keyword>
<keyword id="KW-0813">Transport</keyword>
<sequence>MAYAYLFKYIIIGDTGVGKSCLLLQFTDKRFQPVHDLTIGVEFGARMITIDGKQIKLQIWDTAGQESFRSITRSYYRGAAGALLVYDITRRDTFNHLTTWLEDARQHSNSNMVIMLIGNKSDLESRREVKKEEGEAFAREHGLIFMETSAKTASNVEEAFINTAKEIYEKIQEGVFDINNEANGIKIGPQHAATNATHAGNQGGQQAGGGCC</sequence>
<protein>
    <recommendedName>
        <fullName>Ras-related protein Rab-2A</fullName>
        <ecNumber evidence="2">3.6.5.2</ecNumber>
    </recommendedName>
</protein>
<organism>
    <name type="scientific">Canis lupus familiaris</name>
    <name type="common">Dog</name>
    <name type="synonym">Canis familiaris</name>
    <dbReference type="NCBI Taxonomy" id="9615"/>
    <lineage>
        <taxon>Eukaryota</taxon>
        <taxon>Metazoa</taxon>
        <taxon>Chordata</taxon>
        <taxon>Craniata</taxon>
        <taxon>Vertebrata</taxon>
        <taxon>Euteleostomi</taxon>
        <taxon>Mammalia</taxon>
        <taxon>Eutheria</taxon>
        <taxon>Laurasiatheria</taxon>
        <taxon>Carnivora</taxon>
        <taxon>Caniformia</taxon>
        <taxon>Canidae</taxon>
        <taxon>Canis</taxon>
    </lineage>
</organism>
<accession>P61105</accession>
<accession>P08886</accession>
<feature type="initiator methionine" description="Removed" evidence="3">
    <location>
        <position position="1"/>
    </location>
</feature>
<feature type="chain" id="PRO_0000121065" description="Ras-related protein Rab-2A">
    <location>
        <begin position="2"/>
        <end position="212"/>
    </location>
</feature>
<feature type="region of interest" description="Required for interaction with PRKCI" evidence="1">
    <location>
        <begin position="2"/>
        <end position="19"/>
    </location>
</feature>
<feature type="short sequence motif" description="Switch 1" evidence="4">
    <location>
        <begin position="37"/>
        <end position="42"/>
    </location>
</feature>
<feature type="short sequence motif" description="Switch 2" evidence="4">
    <location>
        <begin position="63"/>
        <end position="72"/>
    </location>
</feature>
<feature type="binding site" evidence="4">
    <location>
        <position position="16"/>
    </location>
    <ligand>
        <name>GTP</name>
        <dbReference type="ChEBI" id="CHEBI:37565"/>
    </ligand>
</feature>
<feature type="binding site" evidence="4">
    <location>
        <position position="17"/>
    </location>
    <ligand>
        <name>GTP</name>
        <dbReference type="ChEBI" id="CHEBI:37565"/>
    </ligand>
</feature>
<feature type="binding site" evidence="4">
    <location>
        <position position="18"/>
    </location>
    <ligand>
        <name>GTP</name>
        <dbReference type="ChEBI" id="CHEBI:37565"/>
    </ligand>
</feature>
<feature type="binding site" evidence="4">
    <location>
        <position position="19"/>
    </location>
    <ligand>
        <name>GTP</name>
        <dbReference type="ChEBI" id="CHEBI:37565"/>
    </ligand>
</feature>
<feature type="binding site" evidence="4">
    <location>
        <position position="20"/>
    </location>
    <ligand>
        <name>GTP</name>
        <dbReference type="ChEBI" id="CHEBI:37565"/>
    </ligand>
</feature>
<feature type="binding site" evidence="3">
    <location>
        <position position="20"/>
    </location>
    <ligand>
        <name>Mg(2+)</name>
        <dbReference type="ChEBI" id="CHEBI:18420"/>
    </ligand>
</feature>
<feature type="binding site" evidence="4">
    <location>
        <position position="21"/>
    </location>
    <ligand>
        <name>GTP</name>
        <dbReference type="ChEBI" id="CHEBI:37565"/>
    </ligand>
</feature>
<feature type="binding site" evidence="4">
    <location>
        <position position="38"/>
    </location>
    <ligand>
        <name>GTP</name>
        <dbReference type="ChEBI" id="CHEBI:37565"/>
    </ligand>
</feature>
<feature type="binding site" evidence="4">
    <location>
        <position position="38"/>
    </location>
    <ligand>
        <name>Mg(2+)</name>
        <dbReference type="ChEBI" id="CHEBI:18420"/>
    </ligand>
</feature>
<feature type="binding site" evidence="3">
    <location>
        <position position="61"/>
    </location>
    <ligand>
        <name>Mg(2+)</name>
        <dbReference type="ChEBI" id="CHEBI:18420"/>
    </ligand>
</feature>
<feature type="binding site" evidence="4">
    <location>
        <position position="64"/>
    </location>
    <ligand>
        <name>GTP</name>
        <dbReference type="ChEBI" id="CHEBI:37565"/>
    </ligand>
</feature>
<feature type="binding site" evidence="4">
    <location>
        <position position="119"/>
    </location>
    <ligand>
        <name>GTP</name>
        <dbReference type="ChEBI" id="CHEBI:37565"/>
    </ligand>
</feature>
<feature type="binding site" evidence="4">
    <location>
        <position position="120"/>
    </location>
    <ligand>
        <name>GTP</name>
        <dbReference type="ChEBI" id="CHEBI:37565"/>
    </ligand>
</feature>
<feature type="binding site" evidence="4">
    <location>
        <position position="122"/>
    </location>
    <ligand>
        <name>GTP</name>
        <dbReference type="ChEBI" id="CHEBI:37565"/>
    </ligand>
</feature>
<feature type="binding site" evidence="4">
    <location>
        <position position="150"/>
    </location>
    <ligand>
        <name>GTP</name>
        <dbReference type="ChEBI" id="CHEBI:37565"/>
    </ligand>
</feature>
<feature type="binding site" evidence="4">
    <location>
        <position position="151"/>
    </location>
    <ligand>
        <name>GTP</name>
        <dbReference type="ChEBI" id="CHEBI:37565"/>
    </ligand>
</feature>
<feature type="modified residue" description="N-acetylalanine" evidence="3">
    <location>
        <position position="2"/>
    </location>
</feature>
<feature type="lipid moiety-binding region" description="S-geranylgeranyl cysteine" evidence="5">
    <location>
        <position position="211"/>
    </location>
</feature>
<feature type="lipid moiety-binding region" description="S-geranylgeranyl cysteine" evidence="5">
    <location>
        <position position="212"/>
    </location>
</feature>
<name>RAB2A_CANLF</name>
<dbReference type="EC" id="3.6.5.2" evidence="2"/>
<dbReference type="EMBL" id="M35521">
    <property type="protein sequence ID" value="AAA30888.1"/>
    <property type="molecule type" value="mRNA"/>
</dbReference>
<dbReference type="PIR" id="A39648">
    <property type="entry name" value="A39648"/>
</dbReference>
<dbReference type="RefSeq" id="NP_001003318.1">
    <property type="nucleotide sequence ID" value="NM_001003318.2"/>
</dbReference>
<dbReference type="SMR" id="P61105"/>
<dbReference type="FunCoup" id="P61105">
    <property type="interactions" value="2608"/>
</dbReference>
<dbReference type="STRING" id="9615.ENSCAFP00000010623"/>
<dbReference type="BindingDB" id="P61105"/>
<dbReference type="PaxDb" id="9612-ENSCAFP00000010623"/>
<dbReference type="Ensembl" id="ENSCAFT00000011465.6">
    <property type="protein sequence ID" value="ENSCAFP00000010623.4"/>
    <property type="gene ID" value="ENSCAFG00000007153.6"/>
</dbReference>
<dbReference type="Ensembl" id="ENSCAFT00030030591.1">
    <property type="protein sequence ID" value="ENSCAFP00030026675.1"/>
    <property type="gene ID" value="ENSCAFG00030016494.1"/>
</dbReference>
<dbReference type="Ensembl" id="ENSCAFT00040031288.1">
    <property type="protein sequence ID" value="ENSCAFP00040027202.1"/>
    <property type="gene ID" value="ENSCAFG00040016877.1"/>
</dbReference>
<dbReference type="Ensembl" id="ENSCAFT00845050528.1">
    <property type="protein sequence ID" value="ENSCAFP00845039616.1"/>
    <property type="gene ID" value="ENSCAFG00845028560.1"/>
</dbReference>
<dbReference type="GeneID" id="404009"/>
<dbReference type="KEGG" id="cfa:404009"/>
<dbReference type="CTD" id="5862"/>
<dbReference type="VEuPathDB" id="HostDB:ENSCAFG00845028560"/>
<dbReference type="VGNC" id="VGNC:45271">
    <property type="gene designation" value="RAB2A"/>
</dbReference>
<dbReference type="eggNOG" id="KOG0098">
    <property type="taxonomic scope" value="Eukaryota"/>
</dbReference>
<dbReference type="GeneTree" id="ENSGT00940000153886"/>
<dbReference type="InParanoid" id="P61105"/>
<dbReference type="OrthoDB" id="9989112at2759"/>
<dbReference type="Reactome" id="R-CFA-162658">
    <property type="pathway name" value="Golgi Cisternae Pericentriolar Stack Reorganization"/>
</dbReference>
<dbReference type="Reactome" id="R-CFA-8873719">
    <property type="pathway name" value="RAB geranylgeranylation"/>
</dbReference>
<dbReference type="PRO" id="PR:P61105"/>
<dbReference type="Proteomes" id="UP000002254">
    <property type="component" value="Chromosome 29"/>
</dbReference>
<dbReference type="Proteomes" id="UP000694429">
    <property type="component" value="Chromosome 29"/>
</dbReference>
<dbReference type="Proteomes" id="UP000694542">
    <property type="component" value="Chromosome 29"/>
</dbReference>
<dbReference type="Proteomes" id="UP000805418">
    <property type="component" value="Chromosome 29"/>
</dbReference>
<dbReference type="GO" id="GO:0001669">
    <property type="term" value="C:acrosomal vesicle"/>
    <property type="evidence" value="ECO:0007669"/>
    <property type="project" value="UniProtKB-SubCell"/>
</dbReference>
<dbReference type="GO" id="GO:0000421">
    <property type="term" value="C:autophagosome membrane"/>
    <property type="evidence" value="ECO:0007669"/>
    <property type="project" value="UniProtKB-SubCell"/>
</dbReference>
<dbReference type="GO" id="GO:0005789">
    <property type="term" value="C:endoplasmic reticulum membrane"/>
    <property type="evidence" value="ECO:0007669"/>
    <property type="project" value="UniProtKB-SubCell"/>
</dbReference>
<dbReference type="GO" id="GO:0033116">
    <property type="term" value="C:endoplasmic reticulum-Golgi intermediate compartment membrane"/>
    <property type="evidence" value="ECO:0007669"/>
    <property type="project" value="UniProtKB-SubCell"/>
</dbReference>
<dbReference type="GO" id="GO:0000139">
    <property type="term" value="C:Golgi membrane"/>
    <property type="evidence" value="ECO:0007669"/>
    <property type="project" value="UniProtKB-SubCell"/>
</dbReference>
<dbReference type="GO" id="GO:0042470">
    <property type="term" value="C:melanosome"/>
    <property type="evidence" value="ECO:0007669"/>
    <property type="project" value="UniProtKB-SubCell"/>
</dbReference>
<dbReference type="GO" id="GO:0003925">
    <property type="term" value="F:G protein activity"/>
    <property type="evidence" value="ECO:0000250"/>
    <property type="project" value="UniProtKB"/>
</dbReference>
<dbReference type="GO" id="GO:0019003">
    <property type="term" value="F:GDP binding"/>
    <property type="evidence" value="ECO:0000250"/>
    <property type="project" value="UniProtKB"/>
</dbReference>
<dbReference type="GO" id="GO:0005525">
    <property type="term" value="F:GTP binding"/>
    <property type="evidence" value="ECO:0000250"/>
    <property type="project" value="UniProtKB"/>
</dbReference>
<dbReference type="GO" id="GO:0003924">
    <property type="term" value="F:GTPase activity"/>
    <property type="evidence" value="ECO:0000250"/>
    <property type="project" value="UniProtKB"/>
</dbReference>
<dbReference type="GO" id="GO:0061909">
    <property type="term" value="P:autophagosome-lysosome fusion"/>
    <property type="evidence" value="ECO:0000250"/>
    <property type="project" value="UniProtKB"/>
</dbReference>
<dbReference type="GO" id="GO:0007030">
    <property type="term" value="P:Golgi organization"/>
    <property type="evidence" value="ECO:0000250"/>
    <property type="project" value="UniProtKB"/>
</dbReference>
<dbReference type="GO" id="GO:0016236">
    <property type="term" value="P:macroautophagy"/>
    <property type="evidence" value="ECO:0000250"/>
    <property type="project" value="UniProtKB"/>
</dbReference>
<dbReference type="GO" id="GO:0015031">
    <property type="term" value="P:protein transport"/>
    <property type="evidence" value="ECO:0007669"/>
    <property type="project" value="UniProtKB-KW"/>
</dbReference>
<dbReference type="CDD" id="cd01866">
    <property type="entry name" value="Rab2"/>
    <property type="match status" value="1"/>
</dbReference>
<dbReference type="FunFam" id="3.40.50.300:FF:000275">
    <property type="entry name" value="Putative ras-related protein Rab-2A"/>
    <property type="match status" value="1"/>
</dbReference>
<dbReference type="Gene3D" id="3.40.50.300">
    <property type="entry name" value="P-loop containing nucleotide triphosphate hydrolases"/>
    <property type="match status" value="1"/>
</dbReference>
<dbReference type="InterPro" id="IPR027417">
    <property type="entry name" value="P-loop_NTPase"/>
</dbReference>
<dbReference type="InterPro" id="IPR050209">
    <property type="entry name" value="Rab_GTPases_membrane_traffic"/>
</dbReference>
<dbReference type="InterPro" id="IPR005225">
    <property type="entry name" value="Small_GTP-bd"/>
</dbReference>
<dbReference type="InterPro" id="IPR001806">
    <property type="entry name" value="Small_GTPase"/>
</dbReference>
<dbReference type="NCBIfam" id="TIGR00231">
    <property type="entry name" value="small_GTP"/>
    <property type="match status" value="1"/>
</dbReference>
<dbReference type="PANTHER" id="PTHR47979">
    <property type="entry name" value="DRAB11-RELATED"/>
    <property type="match status" value="1"/>
</dbReference>
<dbReference type="Pfam" id="PF00071">
    <property type="entry name" value="Ras"/>
    <property type="match status" value="1"/>
</dbReference>
<dbReference type="PRINTS" id="PR00449">
    <property type="entry name" value="RASTRNSFRMNG"/>
</dbReference>
<dbReference type="SMART" id="SM00175">
    <property type="entry name" value="RAB"/>
    <property type="match status" value="1"/>
</dbReference>
<dbReference type="SMART" id="SM00176">
    <property type="entry name" value="RAN"/>
    <property type="match status" value="1"/>
</dbReference>
<dbReference type="SMART" id="SM00173">
    <property type="entry name" value="RAS"/>
    <property type="match status" value="1"/>
</dbReference>
<dbReference type="SMART" id="SM00174">
    <property type="entry name" value="RHO"/>
    <property type="match status" value="1"/>
</dbReference>
<dbReference type="SUPFAM" id="SSF52540">
    <property type="entry name" value="P-loop containing nucleoside triphosphate hydrolases"/>
    <property type="match status" value="1"/>
</dbReference>
<dbReference type="PROSITE" id="PS51419">
    <property type="entry name" value="RAB"/>
    <property type="match status" value="1"/>
</dbReference>
<proteinExistence type="evidence at protein level"/>
<reference key="1">
    <citation type="journal article" date="1990" name="Cell">
        <title>Localization of low molecular weight GTP binding proteins to exocytic and endocytic compartments.</title>
        <authorList>
            <person name="Chavrier P."/>
            <person name="Parton R.G."/>
            <person name="Hauri H.P."/>
            <person name="Simons K."/>
            <person name="Zerial M."/>
        </authorList>
    </citation>
    <scope>NUCLEOTIDE SEQUENCE [MRNA]</scope>
</reference>
<reference key="2">
    <citation type="journal article" date="1990" name="Mol. Cell. Biol.">
        <title>Molecular cloning of YPT1/SEC4-related cDNAs from an epithelial cell line.</title>
        <authorList>
            <person name="Chavrier P."/>
            <person name="Vingron M."/>
            <person name="Sander C."/>
            <person name="Simons K."/>
            <person name="Zerial M."/>
        </authorList>
    </citation>
    <scope>NUCLEOTIDE SEQUENCE [MRNA]</scope>
    <source>
        <strain>Cocker spaniel</strain>
        <tissue>Kidney</tissue>
    </source>
</reference>
<reference key="3">
    <citation type="journal article" date="1991" name="Proc. Natl. Acad. Sci. U.S.A.">
        <title>Isoprenoid modification of rab proteins terminating in CC or CXC motifs.</title>
        <authorList>
            <person name="Khosravi-Far R."/>
            <person name="Lutz R.J."/>
            <person name="Cox A.D."/>
            <person name="Conroy L."/>
            <person name="Bourne J.R."/>
            <person name="Sinensky M."/>
            <person name="Balch W.E."/>
            <person name="Buss J.E."/>
            <person name="Der C.J."/>
        </authorList>
    </citation>
    <scope>ISOPRENYLATION AT CYS-211 AND CYS-212</scope>
</reference>
<gene>
    <name type="primary">RAB2A</name>
    <name type="synonym">RAB2</name>
</gene>